<feature type="chain" id="PRO_0000185914" description="Glutathione S-transferase 2">
    <location>
        <begin position="1"/>
        <end position="208"/>
    </location>
</feature>
<feature type="domain" description="GST N-terminal">
    <location>
        <begin position="1"/>
        <end position="78"/>
    </location>
</feature>
<feature type="domain" description="GST C-terminal">
    <location>
        <begin position="80"/>
        <end position="200"/>
    </location>
</feature>
<feature type="binding site" evidence="4">
    <location>
        <position position="7"/>
    </location>
    <ligand>
        <name>glutathione</name>
        <dbReference type="ChEBI" id="CHEBI:57925"/>
    </ligand>
</feature>
<feature type="binding site" evidence="1">
    <location>
        <position position="42"/>
    </location>
    <ligand>
        <name>glutathione</name>
        <dbReference type="ChEBI" id="CHEBI:57925"/>
    </ligand>
</feature>
<feature type="binding site" evidence="4">
    <location>
        <begin position="49"/>
        <end position="50"/>
    </location>
    <ligand>
        <name>glutathione</name>
        <dbReference type="ChEBI" id="CHEBI:57925"/>
    </ligand>
</feature>
<feature type="binding site" evidence="4">
    <location>
        <begin position="62"/>
        <end position="63"/>
    </location>
    <ligand>
        <name>glutathione</name>
        <dbReference type="ChEBI" id="CHEBI:57925"/>
    </ligand>
</feature>
<feature type="strand" evidence="5">
    <location>
        <begin position="3"/>
        <end position="11"/>
    </location>
</feature>
<feature type="helix" evidence="5">
    <location>
        <begin position="12"/>
        <end position="14"/>
    </location>
</feature>
<feature type="helix" evidence="5">
    <location>
        <begin position="15"/>
        <end position="23"/>
    </location>
</feature>
<feature type="strand" evidence="5">
    <location>
        <begin position="29"/>
        <end position="33"/>
    </location>
</feature>
<feature type="helix" evidence="5">
    <location>
        <begin position="35"/>
        <end position="37"/>
    </location>
</feature>
<feature type="turn" evidence="5">
    <location>
        <begin position="39"/>
        <end position="41"/>
    </location>
</feature>
<feature type="helix" evidence="5">
    <location>
        <begin position="42"/>
        <end position="44"/>
    </location>
</feature>
<feature type="strand" evidence="5">
    <location>
        <begin position="52"/>
        <end position="55"/>
    </location>
</feature>
<feature type="strand" evidence="5">
    <location>
        <begin position="58"/>
        <end position="62"/>
    </location>
</feature>
<feature type="helix" evidence="5">
    <location>
        <begin position="63"/>
        <end position="73"/>
    </location>
</feature>
<feature type="helix" evidence="5">
    <location>
        <begin position="81"/>
        <end position="107"/>
    </location>
</feature>
<feature type="helix" evidence="5">
    <location>
        <begin position="109"/>
        <end position="119"/>
    </location>
</feature>
<feature type="helix" evidence="5">
    <location>
        <begin position="121"/>
        <end position="132"/>
    </location>
</feature>
<feature type="turn" evidence="5">
    <location>
        <begin position="133"/>
        <end position="135"/>
    </location>
</feature>
<feature type="helix" evidence="5">
    <location>
        <begin position="136"/>
        <end position="138"/>
    </location>
</feature>
<feature type="strand" evidence="5">
    <location>
        <begin position="139"/>
        <end position="141"/>
    </location>
</feature>
<feature type="strand" evidence="5">
    <location>
        <begin position="144"/>
        <end position="146"/>
    </location>
</feature>
<feature type="helix" evidence="5">
    <location>
        <begin position="149"/>
        <end position="164"/>
    </location>
</feature>
<feature type="turn" evidence="5">
    <location>
        <begin position="166"/>
        <end position="171"/>
    </location>
</feature>
<feature type="helix" evidence="5">
    <location>
        <begin position="173"/>
        <end position="183"/>
    </location>
</feature>
<feature type="helix" evidence="5">
    <location>
        <begin position="186"/>
        <end position="197"/>
    </location>
</feature>
<protein>
    <recommendedName>
        <fullName>Glutathione S-transferase 2</fullName>
        <ecNumber>2.5.1.18</ecNumber>
    </recommendedName>
    <alternativeName>
        <fullName>GST class-pi</fullName>
    </alternativeName>
</protein>
<evidence type="ECO:0000250" key="1">
    <source>
        <dbReference type="UniProtKB" id="P09211"/>
    </source>
</evidence>
<evidence type="ECO:0000269" key="2">
    <source>
    </source>
</evidence>
<evidence type="ECO:0000305" key="3"/>
<evidence type="ECO:0000305" key="4">
    <source>
    </source>
</evidence>
<evidence type="ECO:0007829" key="5">
    <source>
        <dbReference type="PDB" id="1TU7"/>
    </source>
</evidence>
<accession>P46427</accession>
<name>GSTP_ONCVO</name>
<comment type="function">
    <text>Appears to play a central role in the parasite detoxification system.</text>
</comment>
<comment type="catalytic activity">
    <reaction>
        <text>RX + glutathione = an S-substituted glutathione + a halide anion + H(+)</text>
        <dbReference type="Rhea" id="RHEA:16437"/>
        <dbReference type="ChEBI" id="CHEBI:15378"/>
        <dbReference type="ChEBI" id="CHEBI:16042"/>
        <dbReference type="ChEBI" id="CHEBI:17792"/>
        <dbReference type="ChEBI" id="CHEBI:57925"/>
        <dbReference type="ChEBI" id="CHEBI:90779"/>
        <dbReference type="EC" id="2.5.1.18"/>
    </reaction>
</comment>
<comment type="subunit">
    <text evidence="2">Homodimer.</text>
</comment>
<comment type="tissue specificity">
    <text>Hypodermis, wall of the seminal receptacle and spermatozoa of adult worms.</text>
</comment>
<comment type="similarity">
    <text evidence="3">Belongs to the GST superfamily. Pi family.</text>
</comment>
<reference key="1">
    <citation type="journal article" date="1994" name="Mol. Biochem. Parasitol.">
        <title>Molecular characterisation and localisation of an Onchocerca volvulus pi-class glutathione S-transferase.</title>
        <authorList>
            <person name="Salinas G."/>
            <person name="Braun G."/>
            <person name="Taylor D.W."/>
        </authorList>
    </citation>
    <scope>NUCLEOTIDE SEQUENCE [MRNA]</scope>
    <source>
        <strain>Guatemala</strain>
    </source>
</reference>
<reference key="2">
    <citation type="journal article" date="1994" name="Exp. Parasitol.">
        <title>Onchocerca volvulus: isolation and sequence of a second glutathione S-transferase cDNA.</title>
        <authorList>
            <person name="Liebau E."/>
            <person name="Walter R.D."/>
            <person name="Henkle-Duehrsen K."/>
        </authorList>
    </citation>
    <scope>NUCLEOTIDE SEQUENCE [MRNA]</scope>
</reference>
<reference key="3">
    <citation type="journal article" date="2005" name="J. Biol. Chem.">
        <title>Structure of the major cytosolic glutathione S-transferase from the parasitic nematode Onchocerca volvulus.</title>
        <authorList>
            <person name="Perbandt M."/>
            <person name="Hoppner J."/>
            <person name="Betzel C."/>
            <person name="Walter R.D."/>
            <person name="Liebau E."/>
        </authorList>
    </citation>
    <scope>X-RAY CRYSTALLOGRAPHY (1.5 ANGSTROMS) IN COMPLEXES WITH GLUTATHIONE</scope>
    <scope>SUBUNIT</scope>
</reference>
<proteinExistence type="evidence at protein level"/>
<keyword id="KW-0002">3D-structure</keyword>
<keyword id="KW-1185">Reference proteome</keyword>
<keyword id="KW-0808">Transferase</keyword>
<dbReference type="EC" id="2.5.1.18"/>
<dbReference type="EMBL" id="L28771">
    <property type="protein sequence ID" value="AAA53575.1"/>
    <property type="molecule type" value="mRNA"/>
</dbReference>
<dbReference type="EMBL" id="X77393">
    <property type="protein sequence ID" value="CAA54568.1"/>
    <property type="molecule type" value="mRNA"/>
</dbReference>
<dbReference type="PIR" id="S41933">
    <property type="entry name" value="S41933"/>
</dbReference>
<dbReference type="PDB" id="1TU7">
    <property type="method" value="X-ray"/>
    <property type="resolution" value="1.50 A"/>
    <property type="chains" value="A/B=1-208"/>
</dbReference>
<dbReference type="PDB" id="1TU8">
    <property type="method" value="X-ray"/>
    <property type="resolution" value="1.80 A"/>
    <property type="chains" value="A/B/C/D=1-208"/>
</dbReference>
<dbReference type="PDBsum" id="1TU7"/>
<dbReference type="PDBsum" id="1TU8"/>
<dbReference type="SMR" id="P46427"/>
<dbReference type="STRING" id="6282.P46427"/>
<dbReference type="HOGENOM" id="CLU_039475_2_1_1"/>
<dbReference type="BRENDA" id="2.5.1.18">
    <property type="organism ID" value="4401"/>
</dbReference>
<dbReference type="EvolutionaryTrace" id="P46427"/>
<dbReference type="Proteomes" id="UP000024404">
    <property type="component" value="Unassembled WGS sequence"/>
</dbReference>
<dbReference type="GO" id="GO:0005829">
    <property type="term" value="C:cytosol"/>
    <property type="evidence" value="ECO:0007669"/>
    <property type="project" value="TreeGrafter"/>
</dbReference>
<dbReference type="GO" id="GO:0004364">
    <property type="term" value="F:glutathione transferase activity"/>
    <property type="evidence" value="ECO:0007669"/>
    <property type="project" value="UniProtKB-EC"/>
</dbReference>
<dbReference type="GO" id="GO:0006749">
    <property type="term" value="P:glutathione metabolic process"/>
    <property type="evidence" value="ECO:0007669"/>
    <property type="project" value="TreeGrafter"/>
</dbReference>
<dbReference type="CDD" id="cd03210">
    <property type="entry name" value="GST_C_Pi"/>
    <property type="match status" value="1"/>
</dbReference>
<dbReference type="CDD" id="cd03076">
    <property type="entry name" value="GST_N_Pi"/>
    <property type="match status" value="1"/>
</dbReference>
<dbReference type="FunFam" id="3.40.30.10:FF:000168">
    <property type="entry name" value="Glutathione S-transferase 2"/>
    <property type="match status" value="1"/>
</dbReference>
<dbReference type="FunFam" id="1.20.1050.10:FF:000020">
    <property type="entry name" value="Glutathione S-transferase P 1"/>
    <property type="match status" value="1"/>
</dbReference>
<dbReference type="Gene3D" id="1.20.1050.10">
    <property type="match status" value="1"/>
</dbReference>
<dbReference type="Gene3D" id="3.40.30.10">
    <property type="entry name" value="Glutaredoxin"/>
    <property type="match status" value="1"/>
</dbReference>
<dbReference type="InterPro" id="IPR010987">
    <property type="entry name" value="Glutathione-S-Trfase_C-like"/>
</dbReference>
<dbReference type="InterPro" id="IPR036282">
    <property type="entry name" value="Glutathione-S-Trfase_C_sf"/>
</dbReference>
<dbReference type="InterPro" id="IPR040079">
    <property type="entry name" value="Glutathione_S-Trfase"/>
</dbReference>
<dbReference type="InterPro" id="IPR004045">
    <property type="entry name" value="Glutathione_S-Trfase_N"/>
</dbReference>
<dbReference type="InterPro" id="IPR004046">
    <property type="entry name" value="GST_C"/>
</dbReference>
<dbReference type="InterPro" id="IPR003082">
    <property type="entry name" value="GST_pi"/>
</dbReference>
<dbReference type="InterPro" id="IPR050213">
    <property type="entry name" value="GST_superfamily"/>
</dbReference>
<dbReference type="InterPro" id="IPR036249">
    <property type="entry name" value="Thioredoxin-like_sf"/>
</dbReference>
<dbReference type="PANTHER" id="PTHR11571">
    <property type="entry name" value="GLUTATHIONE S-TRANSFERASE"/>
    <property type="match status" value="1"/>
</dbReference>
<dbReference type="PANTHER" id="PTHR11571:SF141">
    <property type="entry name" value="GLUTATHIONE S-TRANSFERASE"/>
    <property type="match status" value="1"/>
</dbReference>
<dbReference type="Pfam" id="PF14497">
    <property type="entry name" value="GST_C_3"/>
    <property type="match status" value="1"/>
</dbReference>
<dbReference type="Pfam" id="PF02798">
    <property type="entry name" value="GST_N"/>
    <property type="match status" value="1"/>
</dbReference>
<dbReference type="PRINTS" id="PR01268">
    <property type="entry name" value="GSTRNSFRASEP"/>
</dbReference>
<dbReference type="SFLD" id="SFLDG01205">
    <property type="entry name" value="AMPS.1"/>
    <property type="match status" value="1"/>
</dbReference>
<dbReference type="SFLD" id="SFLDS00019">
    <property type="entry name" value="Glutathione_Transferase_(cytos"/>
    <property type="match status" value="1"/>
</dbReference>
<dbReference type="SUPFAM" id="SSF47616">
    <property type="entry name" value="GST C-terminal domain-like"/>
    <property type="match status" value="1"/>
</dbReference>
<dbReference type="SUPFAM" id="SSF52833">
    <property type="entry name" value="Thioredoxin-like"/>
    <property type="match status" value="1"/>
</dbReference>
<dbReference type="PROSITE" id="PS50405">
    <property type="entry name" value="GST_CTER"/>
    <property type="match status" value="1"/>
</dbReference>
<dbReference type="PROSITE" id="PS50404">
    <property type="entry name" value="GST_NTER"/>
    <property type="match status" value="1"/>
</dbReference>
<organism>
    <name type="scientific">Onchocerca volvulus</name>
    <dbReference type="NCBI Taxonomy" id="6282"/>
    <lineage>
        <taxon>Eukaryota</taxon>
        <taxon>Metazoa</taxon>
        <taxon>Ecdysozoa</taxon>
        <taxon>Nematoda</taxon>
        <taxon>Chromadorea</taxon>
        <taxon>Rhabditida</taxon>
        <taxon>Spirurina</taxon>
        <taxon>Spiruromorpha</taxon>
        <taxon>Filarioidea</taxon>
        <taxon>Onchocercidae</taxon>
        <taxon>Onchocerca</taxon>
    </lineage>
</organism>
<sequence>MSYKLTYFSIRGLAEPIRLFLVDQDIKFIDDRIAKDDFSSIKSQFQFGQLPCLYDGDQQIVQSGAILRHLARKYNLNGENEMETTYIDMFCEGVRDLHVKYTRMIYMAYETEKDPYIKSILPGELAKFEKLLATRGNGRNLILGDKISYADYALFEELDVHQILDPHCLDKFPLLKAFHQRMKDRPKLKEYCEKRDAAKVPVNGNGKQ</sequence>
<gene>
    <name type="primary">GST2</name>
</gene>